<organism>
    <name type="scientific">Novosphingobium aromaticivorans (strain ATCC 700278 / DSM 12444 / CCUG 56034 / CIP 105152 / NBRC 16084 / F199)</name>
    <dbReference type="NCBI Taxonomy" id="279238"/>
    <lineage>
        <taxon>Bacteria</taxon>
        <taxon>Pseudomonadati</taxon>
        <taxon>Pseudomonadota</taxon>
        <taxon>Alphaproteobacteria</taxon>
        <taxon>Sphingomonadales</taxon>
        <taxon>Sphingomonadaceae</taxon>
        <taxon>Novosphingobium</taxon>
    </lineage>
</organism>
<keyword id="KW-0963">Cytoplasm</keyword>
<keyword id="KW-0342">GTP-binding</keyword>
<keyword id="KW-0436">Ligase</keyword>
<keyword id="KW-0460">Magnesium</keyword>
<keyword id="KW-0479">Metal-binding</keyword>
<keyword id="KW-0547">Nucleotide-binding</keyword>
<keyword id="KW-0658">Purine biosynthesis</keyword>
<keyword id="KW-1185">Reference proteome</keyword>
<dbReference type="EC" id="6.3.4.4" evidence="1"/>
<dbReference type="EMBL" id="CP000248">
    <property type="protein sequence ID" value="ABD27119.1"/>
    <property type="molecule type" value="Genomic_DNA"/>
</dbReference>
<dbReference type="RefSeq" id="WP_011446325.1">
    <property type="nucleotide sequence ID" value="NC_007794.1"/>
</dbReference>
<dbReference type="SMR" id="Q2G4V4"/>
<dbReference type="STRING" id="279238.Saro_2683"/>
<dbReference type="KEGG" id="nar:Saro_2683"/>
<dbReference type="eggNOG" id="COG0104">
    <property type="taxonomic scope" value="Bacteria"/>
</dbReference>
<dbReference type="HOGENOM" id="CLU_029848_0_0_5"/>
<dbReference type="UniPathway" id="UPA00075">
    <property type="reaction ID" value="UER00335"/>
</dbReference>
<dbReference type="Proteomes" id="UP000009134">
    <property type="component" value="Chromosome"/>
</dbReference>
<dbReference type="GO" id="GO:0005737">
    <property type="term" value="C:cytoplasm"/>
    <property type="evidence" value="ECO:0007669"/>
    <property type="project" value="UniProtKB-SubCell"/>
</dbReference>
<dbReference type="GO" id="GO:0004019">
    <property type="term" value="F:adenylosuccinate synthase activity"/>
    <property type="evidence" value="ECO:0007669"/>
    <property type="project" value="UniProtKB-UniRule"/>
</dbReference>
<dbReference type="GO" id="GO:0005525">
    <property type="term" value="F:GTP binding"/>
    <property type="evidence" value="ECO:0007669"/>
    <property type="project" value="UniProtKB-UniRule"/>
</dbReference>
<dbReference type="GO" id="GO:0000287">
    <property type="term" value="F:magnesium ion binding"/>
    <property type="evidence" value="ECO:0007669"/>
    <property type="project" value="UniProtKB-UniRule"/>
</dbReference>
<dbReference type="GO" id="GO:0044208">
    <property type="term" value="P:'de novo' AMP biosynthetic process"/>
    <property type="evidence" value="ECO:0007669"/>
    <property type="project" value="UniProtKB-UniRule"/>
</dbReference>
<dbReference type="GO" id="GO:0046040">
    <property type="term" value="P:IMP metabolic process"/>
    <property type="evidence" value="ECO:0007669"/>
    <property type="project" value="TreeGrafter"/>
</dbReference>
<dbReference type="CDD" id="cd03108">
    <property type="entry name" value="AdSS"/>
    <property type="match status" value="1"/>
</dbReference>
<dbReference type="FunFam" id="1.10.300.10:FF:000001">
    <property type="entry name" value="Adenylosuccinate synthetase"/>
    <property type="match status" value="1"/>
</dbReference>
<dbReference type="FunFam" id="3.90.170.10:FF:000001">
    <property type="entry name" value="Adenylosuccinate synthetase"/>
    <property type="match status" value="1"/>
</dbReference>
<dbReference type="Gene3D" id="3.40.440.10">
    <property type="entry name" value="Adenylosuccinate Synthetase, subunit A, domain 1"/>
    <property type="match status" value="1"/>
</dbReference>
<dbReference type="Gene3D" id="1.10.300.10">
    <property type="entry name" value="Adenylosuccinate Synthetase, subunit A, domain 2"/>
    <property type="match status" value="1"/>
</dbReference>
<dbReference type="Gene3D" id="3.90.170.10">
    <property type="entry name" value="Adenylosuccinate Synthetase, subunit A, domain 3"/>
    <property type="match status" value="1"/>
</dbReference>
<dbReference type="HAMAP" id="MF_00011">
    <property type="entry name" value="Adenylosucc_synth"/>
    <property type="match status" value="1"/>
</dbReference>
<dbReference type="InterPro" id="IPR018220">
    <property type="entry name" value="Adenylosuccin_syn_GTP-bd"/>
</dbReference>
<dbReference type="InterPro" id="IPR033128">
    <property type="entry name" value="Adenylosuccin_syn_Lys_AS"/>
</dbReference>
<dbReference type="InterPro" id="IPR042109">
    <property type="entry name" value="Adenylosuccinate_synth_dom1"/>
</dbReference>
<dbReference type="InterPro" id="IPR042110">
    <property type="entry name" value="Adenylosuccinate_synth_dom2"/>
</dbReference>
<dbReference type="InterPro" id="IPR042111">
    <property type="entry name" value="Adenylosuccinate_synth_dom3"/>
</dbReference>
<dbReference type="InterPro" id="IPR001114">
    <property type="entry name" value="Adenylosuccinate_synthetase"/>
</dbReference>
<dbReference type="InterPro" id="IPR027417">
    <property type="entry name" value="P-loop_NTPase"/>
</dbReference>
<dbReference type="NCBIfam" id="NF002223">
    <property type="entry name" value="PRK01117.1"/>
    <property type="match status" value="1"/>
</dbReference>
<dbReference type="NCBIfam" id="TIGR00184">
    <property type="entry name" value="purA"/>
    <property type="match status" value="1"/>
</dbReference>
<dbReference type="PANTHER" id="PTHR11846">
    <property type="entry name" value="ADENYLOSUCCINATE SYNTHETASE"/>
    <property type="match status" value="1"/>
</dbReference>
<dbReference type="PANTHER" id="PTHR11846:SF0">
    <property type="entry name" value="ADENYLOSUCCINATE SYNTHETASE"/>
    <property type="match status" value="1"/>
</dbReference>
<dbReference type="Pfam" id="PF00709">
    <property type="entry name" value="Adenylsucc_synt"/>
    <property type="match status" value="1"/>
</dbReference>
<dbReference type="SMART" id="SM00788">
    <property type="entry name" value="Adenylsucc_synt"/>
    <property type="match status" value="1"/>
</dbReference>
<dbReference type="SUPFAM" id="SSF52540">
    <property type="entry name" value="P-loop containing nucleoside triphosphate hydrolases"/>
    <property type="match status" value="1"/>
</dbReference>
<dbReference type="PROSITE" id="PS01266">
    <property type="entry name" value="ADENYLOSUCCIN_SYN_1"/>
    <property type="match status" value="1"/>
</dbReference>
<dbReference type="PROSITE" id="PS00513">
    <property type="entry name" value="ADENYLOSUCCIN_SYN_2"/>
    <property type="match status" value="1"/>
</dbReference>
<name>PURA_NOVAD</name>
<feature type="chain" id="PRO_1000000880" description="Adenylosuccinate synthetase">
    <location>
        <begin position="1"/>
        <end position="429"/>
    </location>
</feature>
<feature type="active site" description="Proton acceptor" evidence="1">
    <location>
        <position position="13"/>
    </location>
</feature>
<feature type="active site" description="Proton donor" evidence="1">
    <location>
        <position position="41"/>
    </location>
</feature>
<feature type="binding site" evidence="1">
    <location>
        <begin position="12"/>
        <end position="18"/>
    </location>
    <ligand>
        <name>GTP</name>
        <dbReference type="ChEBI" id="CHEBI:37565"/>
    </ligand>
</feature>
<feature type="binding site" description="in other chain" evidence="1">
    <location>
        <begin position="13"/>
        <end position="16"/>
    </location>
    <ligand>
        <name>IMP</name>
        <dbReference type="ChEBI" id="CHEBI:58053"/>
        <note>ligand shared between dimeric partners</note>
    </ligand>
</feature>
<feature type="binding site" evidence="1">
    <location>
        <position position="13"/>
    </location>
    <ligand>
        <name>Mg(2+)</name>
        <dbReference type="ChEBI" id="CHEBI:18420"/>
    </ligand>
</feature>
<feature type="binding site" description="in other chain" evidence="1">
    <location>
        <begin position="38"/>
        <end position="41"/>
    </location>
    <ligand>
        <name>IMP</name>
        <dbReference type="ChEBI" id="CHEBI:58053"/>
        <note>ligand shared between dimeric partners</note>
    </ligand>
</feature>
<feature type="binding site" evidence="1">
    <location>
        <begin position="40"/>
        <end position="42"/>
    </location>
    <ligand>
        <name>GTP</name>
        <dbReference type="ChEBI" id="CHEBI:37565"/>
    </ligand>
</feature>
<feature type="binding site" evidence="1">
    <location>
        <position position="40"/>
    </location>
    <ligand>
        <name>Mg(2+)</name>
        <dbReference type="ChEBI" id="CHEBI:18420"/>
    </ligand>
</feature>
<feature type="binding site" description="in other chain" evidence="1">
    <location>
        <position position="129"/>
    </location>
    <ligand>
        <name>IMP</name>
        <dbReference type="ChEBI" id="CHEBI:58053"/>
        <note>ligand shared between dimeric partners</note>
    </ligand>
</feature>
<feature type="binding site" evidence="1">
    <location>
        <position position="143"/>
    </location>
    <ligand>
        <name>IMP</name>
        <dbReference type="ChEBI" id="CHEBI:58053"/>
        <note>ligand shared between dimeric partners</note>
    </ligand>
</feature>
<feature type="binding site" description="in other chain" evidence="1">
    <location>
        <position position="223"/>
    </location>
    <ligand>
        <name>IMP</name>
        <dbReference type="ChEBI" id="CHEBI:58053"/>
        <note>ligand shared between dimeric partners</note>
    </ligand>
</feature>
<feature type="binding site" description="in other chain" evidence="1">
    <location>
        <position position="238"/>
    </location>
    <ligand>
        <name>IMP</name>
        <dbReference type="ChEBI" id="CHEBI:58053"/>
        <note>ligand shared between dimeric partners</note>
    </ligand>
</feature>
<feature type="binding site" evidence="1">
    <location>
        <begin position="298"/>
        <end position="304"/>
    </location>
    <ligand>
        <name>substrate</name>
    </ligand>
</feature>
<feature type="binding site" description="in other chain" evidence="1">
    <location>
        <position position="302"/>
    </location>
    <ligand>
        <name>IMP</name>
        <dbReference type="ChEBI" id="CHEBI:58053"/>
        <note>ligand shared between dimeric partners</note>
    </ligand>
</feature>
<feature type="binding site" evidence="1">
    <location>
        <position position="304"/>
    </location>
    <ligand>
        <name>GTP</name>
        <dbReference type="ChEBI" id="CHEBI:37565"/>
    </ligand>
</feature>
<feature type="binding site" evidence="1">
    <location>
        <begin position="330"/>
        <end position="332"/>
    </location>
    <ligand>
        <name>GTP</name>
        <dbReference type="ChEBI" id="CHEBI:37565"/>
    </ligand>
</feature>
<feature type="binding site" evidence="1">
    <location>
        <begin position="412"/>
        <end position="414"/>
    </location>
    <ligand>
        <name>GTP</name>
        <dbReference type="ChEBI" id="CHEBI:37565"/>
    </ligand>
</feature>
<reference key="1">
    <citation type="submission" date="2006-01" db="EMBL/GenBank/DDBJ databases">
        <title>Complete sequence of Novosphingobium aromaticivorans DSM 12444.</title>
        <authorList>
            <consortium name="US DOE Joint Genome Institute"/>
            <person name="Copeland A."/>
            <person name="Lucas S."/>
            <person name="Lapidus A."/>
            <person name="Barry K."/>
            <person name="Detter J.C."/>
            <person name="Glavina T."/>
            <person name="Hammon N."/>
            <person name="Israni S."/>
            <person name="Pitluck S."/>
            <person name="Chain P."/>
            <person name="Malfatti S."/>
            <person name="Shin M."/>
            <person name="Vergez L."/>
            <person name="Schmutz J."/>
            <person name="Larimer F."/>
            <person name="Land M."/>
            <person name="Kyrpides N."/>
            <person name="Ivanova N."/>
            <person name="Fredrickson J."/>
            <person name="Balkwill D."/>
            <person name="Romine M.F."/>
            <person name="Richardson P."/>
        </authorList>
    </citation>
    <scope>NUCLEOTIDE SEQUENCE [LARGE SCALE GENOMIC DNA]</scope>
    <source>
        <strain>ATCC 700278 / DSM 12444 / CCUG 56034 / CIP 105152 / NBRC 16084 / F199</strain>
    </source>
</reference>
<gene>
    <name evidence="1" type="primary">purA</name>
    <name type="ordered locus">Saro_2683</name>
</gene>
<protein>
    <recommendedName>
        <fullName evidence="1">Adenylosuccinate synthetase</fullName>
        <shortName evidence="1">AMPSase</shortName>
        <shortName evidence="1">AdSS</shortName>
        <ecNumber evidence="1">6.3.4.4</ecNumber>
    </recommendedName>
    <alternativeName>
        <fullName evidence="1">IMP--aspartate ligase</fullName>
    </alternativeName>
</protein>
<comment type="function">
    <text evidence="1">Plays an important role in the de novo pathway of purine nucleotide biosynthesis. Catalyzes the first committed step in the biosynthesis of AMP from IMP.</text>
</comment>
<comment type="catalytic activity">
    <reaction evidence="1">
        <text>IMP + L-aspartate + GTP = N(6)-(1,2-dicarboxyethyl)-AMP + GDP + phosphate + 2 H(+)</text>
        <dbReference type="Rhea" id="RHEA:15753"/>
        <dbReference type="ChEBI" id="CHEBI:15378"/>
        <dbReference type="ChEBI" id="CHEBI:29991"/>
        <dbReference type="ChEBI" id="CHEBI:37565"/>
        <dbReference type="ChEBI" id="CHEBI:43474"/>
        <dbReference type="ChEBI" id="CHEBI:57567"/>
        <dbReference type="ChEBI" id="CHEBI:58053"/>
        <dbReference type="ChEBI" id="CHEBI:58189"/>
        <dbReference type="EC" id="6.3.4.4"/>
    </reaction>
</comment>
<comment type="cofactor">
    <cofactor evidence="1">
        <name>Mg(2+)</name>
        <dbReference type="ChEBI" id="CHEBI:18420"/>
    </cofactor>
    <text evidence="1">Binds 1 Mg(2+) ion per subunit.</text>
</comment>
<comment type="pathway">
    <text evidence="1">Purine metabolism; AMP biosynthesis via de novo pathway; AMP from IMP: step 1/2.</text>
</comment>
<comment type="subunit">
    <text evidence="1">Homodimer.</text>
</comment>
<comment type="subcellular location">
    <subcellularLocation>
        <location evidence="1">Cytoplasm</location>
    </subcellularLocation>
</comment>
<comment type="similarity">
    <text evidence="1">Belongs to the adenylosuccinate synthetase family.</text>
</comment>
<proteinExistence type="inferred from homology"/>
<evidence type="ECO:0000255" key="1">
    <source>
        <dbReference type="HAMAP-Rule" id="MF_00011"/>
    </source>
</evidence>
<accession>Q2G4V4</accession>
<sequence length="429" mass="46027">MANVTVIGAQWGDEGKGKIVDWLASRADAVVRFQGGHNAGHTLVVGEQVYKLSLLPSGIVTGTLSIIGNGVVLDPWALKAEIEKLTGQGVEINAENFAIADNCPLILPLHRDLDGLREQAAGAGKIGTTGRGIGPAYEDKVGRRAIRVCDLAHLDALDAQLDRLCAHHDALRAGFGQPPVDRAALIEELREIAPYVLQFAQPVWKRLNTVRKAGARILFEGAQGVLLDVDHGTYPFVTSSNTVSGTAASGSGLGPAQTGFVLGIVKAYTTRVGSGPFPTELEDETGQRLGERGHEFGTVTGRKRRCGWFDAVLVRQSCAISGVTGIALTKLDVLDGFEKVKICTGYRLRGKVLDYFPSHAADQAEVEPIYEEMDGWSGTTAGARSWADLPAQAIKYIQRVQELIETPVALVSTSPEREDTILVRDPFVD</sequence>